<dbReference type="EC" id="2.3.1.181" evidence="1"/>
<dbReference type="EMBL" id="CP000655">
    <property type="protein sequence ID" value="ABP35174.1"/>
    <property type="molecule type" value="Genomic_DNA"/>
</dbReference>
<dbReference type="RefSeq" id="WP_011903797.1">
    <property type="nucleotide sequence ID" value="NC_009379.1"/>
</dbReference>
<dbReference type="SMR" id="A4T0B0"/>
<dbReference type="GeneID" id="31482353"/>
<dbReference type="KEGG" id="pnu:Pnuc_1962"/>
<dbReference type="eggNOG" id="COG0321">
    <property type="taxonomic scope" value="Bacteria"/>
</dbReference>
<dbReference type="HOGENOM" id="CLU_035168_3_1_4"/>
<dbReference type="UniPathway" id="UPA00538">
    <property type="reaction ID" value="UER00592"/>
</dbReference>
<dbReference type="Proteomes" id="UP000000231">
    <property type="component" value="Chromosome"/>
</dbReference>
<dbReference type="GO" id="GO:0005737">
    <property type="term" value="C:cytoplasm"/>
    <property type="evidence" value="ECO:0007669"/>
    <property type="project" value="UniProtKB-SubCell"/>
</dbReference>
<dbReference type="GO" id="GO:0033819">
    <property type="term" value="F:lipoyl(octanoyl) transferase activity"/>
    <property type="evidence" value="ECO:0007669"/>
    <property type="project" value="UniProtKB-EC"/>
</dbReference>
<dbReference type="GO" id="GO:0036211">
    <property type="term" value="P:protein modification process"/>
    <property type="evidence" value="ECO:0007669"/>
    <property type="project" value="InterPro"/>
</dbReference>
<dbReference type="CDD" id="cd16444">
    <property type="entry name" value="LipB"/>
    <property type="match status" value="1"/>
</dbReference>
<dbReference type="FunFam" id="3.30.930.10:FF:000020">
    <property type="entry name" value="Octanoyltransferase"/>
    <property type="match status" value="1"/>
</dbReference>
<dbReference type="Gene3D" id="3.30.930.10">
    <property type="entry name" value="Bira Bifunctional Protein, Domain 2"/>
    <property type="match status" value="1"/>
</dbReference>
<dbReference type="HAMAP" id="MF_00013">
    <property type="entry name" value="LipB"/>
    <property type="match status" value="1"/>
</dbReference>
<dbReference type="InterPro" id="IPR045864">
    <property type="entry name" value="aa-tRNA-synth_II/BPL/LPL"/>
</dbReference>
<dbReference type="InterPro" id="IPR004143">
    <property type="entry name" value="BPL_LPL_catalytic"/>
</dbReference>
<dbReference type="InterPro" id="IPR000544">
    <property type="entry name" value="Octanoyltransferase"/>
</dbReference>
<dbReference type="InterPro" id="IPR020605">
    <property type="entry name" value="Octanoyltransferase_CS"/>
</dbReference>
<dbReference type="NCBIfam" id="TIGR00214">
    <property type="entry name" value="lipB"/>
    <property type="match status" value="1"/>
</dbReference>
<dbReference type="NCBIfam" id="NF010922">
    <property type="entry name" value="PRK14342.1"/>
    <property type="match status" value="1"/>
</dbReference>
<dbReference type="NCBIfam" id="NF010923">
    <property type="entry name" value="PRK14343.1"/>
    <property type="match status" value="1"/>
</dbReference>
<dbReference type="PANTHER" id="PTHR10993:SF7">
    <property type="entry name" value="LIPOYLTRANSFERASE 2, MITOCHONDRIAL-RELATED"/>
    <property type="match status" value="1"/>
</dbReference>
<dbReference type="PANTHER" id="PTHR10993">
    <property type="entry name" value="OCTANOYLTRANSFERASE"/>
    <property type="match status" value="1"/>
</dbReference>
<dbReference type="Pfam" id="PF21948">
    <property type="entry name" value="LplA-B_cat"/>
    <property type="match status" value="1"/>
</dbReference>
<dbReference type="PIRSF" id="PIRSF016262">
    <property type="entry name" value="LPLase"/>
    <property type="match status" value="1"/>
</dbReference>
<dbReference type="SUPFAM" id="SSF55681">
    <property type="entry name" value="Class II aaRS and biotin synthetases"/>
    <property type="match status" value="1"/>
</dbReference>
<dbReference type="PROSITE" id="PS51733">
    <property type="entry name" value="BPL_LPL_CATALYTIC"/>
    <property type="match status" value="1"/>
</dbReference>
<dbReference type="PROSITE" id="PS01313">
    <property type="entry name" value="LIPB"/>
    <property type="match status" value="1"/>
</dbReference>
<accession>A4T0B0</accession>
<protein>
    <recommendedName>
        <fullName evidence="1">Octanoyltransferase</fullName>
        <ecNumber evidence="1">2.3.1.181</ecNumber>
    </recommendedName>
    <alternativeName>
        <fullName evidence="1">Lipoate-protein ligase B</fullName>
    </alternativeName>
    <alternativeName>
        <fullName evidence="1">Lipoyl/octanoyl transferase</fullName>
    </alternativeName>
    <alternativeName>
        <fullName evidence="1">Octanoyl-[acyl-carrier-protein]-protein N-octanoyltransferase</fullName>
    </alternativeName>
</protein>
<feature type="chain" id="PRO_1000074008" description="Octanoyltransferase">
    <location>
        <begin position="1"/>
        <end position="214"/>
    </location>
</feature>
<feature type="domain" description="BPL/LPL catalytic" evidence="2">
    <location>
        <begin position="29"/>
        <end position="214"/>
    </location>
</feature>
<feature type="active site" description="Acyl-thioester intermediate" evidence="1">
    <location>
        <position position="177"/>
    </location>
</feature>
<feature type="binding site" evidence="1">
    <location>
        <begin position="69"/>
        <end position="76"/>
    </location>
    <ligand>
        <name>substrate</name>
    </ligand>
</feature>
<feature type="binding site" evidence="1">
    <location>
        <begin position="146"/>
        <end position="148"/>
    </location>
    <ligand>
        <name>substrate</name>
    </ligand>
</feature>
<feature type="binding site" evidence="1">
    <location>
        <begin position="159"/>
        <end position="161"/>
    </location>
    <ligand>
        <name>substrate</name>
    </ligand>
</feature>
<feature type="site" description="Lowers pKa of active site Cys" evidence="1">
    <location>
        <position position="143"/>
    </location>
</feature>
<name>LIPB_POLAQ</name>
<evidence type="ECO:0000255" key="1">
    <source>
        <dbReference type="HAMAP-Rule" id="MF_00013"/>
    </source>
</evidence>
<evidence type="ECO:0000255" key="2">
    <source>
        <dbReference type="PROSITE-ProRule" id="PRU01067"/>
    </source>
</evidence>
<organism>
    <name type="scientific">Polynucleobacter asymbioticus (strain DSM 18221 / CIP 109841 / QLW-P1DMWA-1)</name>
    <name type="common">Polynucleobacter necessarius subsp. asymbioticus</name>
    <dbReference type="NCBI Taxonomy" id="312153"/>
    <lineage>
        <taxon>Bacteria</taxon>
        <taxon>Pseudomonadati</taxon>
        <taxon>Pseudomonadota</taxon>
        <taxon>Betaproteobacteria</taxon>
        <taxon>Burkholderiales</taxon>
        <taxon>Burkholderiaceae</taxon>
        <taxon>Polynucleobacter</taxon>
    </lineage>
</organism>
<gene>
    <name evidence="1" type="primary">lipB</name>
    <name type="ordered locus">Pnuc_1962</name>
</gene>
<keyword id="KW-0012">Acyltransferase</keyword>
<keyword id="KW-0963">Cytoplasm</keyword>
<keyword id="KW-1185">Reference proteome</keyword>
<keyword id="KW-0808">Transferase</keyword>
<sequence length="214" mass="23427">MTVLVKHLGVVDYVSTYEVMRAFTKERNSTTPDEIWILEHPPVFTLGLAGDAGNLHSPSNQIPLVQVDRGGEITYHGPGQIVVYLLLDLKRLGIFVKELVSRIEQALINTLADFGLVAERRSGAPGIYVSLQPGISPEWIGAKVAALGLKVSKSCSYHGLALNVATDLEAFGRIHPCGYEGLKTVDMQTLGIKDNIDTISQRLLEHLQKQLMPT</sequence>
<proteinExistence type="inferred from homology"/>
<reference key="1">
    <citation type="journal article" date="2012" name="Stand. Genomic Sci.">
        <title>Complete genome sequence of Polynucleobacter necessarius subsp. asymbioticus type strain (QLW-P1DMWA-1(T)).</title>
        <authorList>
            <person name="Meincke L."/>
            <person name="Copeland A."/>
            <person name="Lapidus A."/>
            <person name="Lucas S."/>
            <person name="Berry K.W."/>
            <person name="Del Rio T.G."/>
            <person name="Hammon N."/>
            <person name="Dalin E."/>
            <person name="Tice H."/>
            <person name="Pitluck S."/>
            <person name="Richardson P."/>
            <person name="Bruce D."/>
            <person name="Goodwin L."/>
            <person name="Han C."/>
            <person name="Tapia R."/>
            <person name="Detter J.C."/>
            <person name="Schmutz J."/>
            <person name="Brettin T."/>
            <person name="Larimer F."/>
            <person name="Land M."/>
            <person name="Hauser L."/>
            <person name="Kyrpides N.C."/>
            <person name="Ivanova N."/>
            <person name="Goker M."/>
            <person name="Woyke T."/>
            <person name="Wu Q.L."/>
            <person name="Pockl M."/>
            <person name="Hahn M.W."/>
            <person name="Klenk H.P."/>
        </authorList>
    </citation>
    <scope>NUCLEOTIDE SEQUENCE [LARGE SCALE GENOMIC DNA]</scope>
    <source>
        <strain>DSM 18221 / CIP 109841 / QLW-P1DMWA-1</strain>
    </source>
</reference>
<comment type="function">
    <text evidence="1">Catalyzes the transfer of endogenously produced octanoic acid from octanoyl-acyl-carrier-protein onto the lipoyl domains of lipoate-dependent enzymes. Lipoyl-ACP can also act as a substrate although octanoyl-ACP is likely to be the physiological substrate.</text>
</comment>
<comment type="catalytic activity">
    <reaction evidence="1">
        <text>octanoyl-[ACP] + L-lysyl-[protein] = N(6)-octanoyl-L-lysyl-[protein] + holo-[ACP] + H(+)</text>
        <dbReference type="Rhea" id="RHEA:17665"/>
        <dbReference type="Rhea" id="RHEA-COMP:9636"/>
        <dbReference type="Rhea" id="RHEA-COMP:9685"/>
        <dbReference type="Rhea" id="RHEA-COMP:9752"/>
        <dbReference type="Rhea" id="RHEA-COMP:9928"/>
        <dbReference type="ChEBI" id="CHEBI:15378"/>
        <dbReference type="ChEBI" id="CHEBI:29969"/>
        <dbReference type="ChEBI" id="CHEBI:64479"/>
        <dbReference type="ChEBI" id="CHEBI:78463"/>
        <dbReference type="ChEBI" id="CHEBI:78809"/>
        <dbReference type="EC" id="2.3.1.181"/>
    </reaction>
</comment>
<comment type="pathway">
    <text evidence="1">Protein modification; protein lipoylation via endogenous pathway; protein N(6)-(lipoyl)lysine from octanoyl-[acyl-carrier-protein]: step 1/2.</text>
</comment>
<comment type="subcellular location">
    <subcellularLocation>
        <location evidence="1">Cytoplasm</location>
    </subcellularLocation>
</comment>
<comment type="miscellaneous">
    <text evidence="1">In the reaction, the free carboxyl group of octanoic acid is attached via an amide linkage to the epsilon-amino group of a specific lysine residue of lipoyl domains of lipoate-dependent enzymes.</text>
</comment>
<comment type="similarity">
    <text evidence="1">Belongs to the LipB family.</text>
</comment>